<comment type="function">
    <text evidence="1">Transfers the gamma-phosphate of ATP to the 4'-position of a tetraacyldisaccharide 1-phosphate intermediate (termed DS-1-P) to form tetraacyldisaccharide 1,4'-bis-phosphate (lipid IVA).</text>
</comment>
<comment type="catalytic activity">
    <reaction evidence="1">
        <text>a lipid A disaccharide + ATP = a lipid IVA + ADP + H(+)</text>
        <dbReference type="Rhea" id="RHEA:67840"/>
        <dbReference type="ChEBI" id="CHEBI:15378"/>
        <dbReference type="ChEBI" id="CHEBI:30616"/>
        <dbReference type="ChEBI" id="CHEBI:176343"/>
        <dbReference type="ChEBI" id="CHEBI:176425"/>
        <dbReference type="ChEBI" id="CHEBI:456216"/>
        <dbReference type="EC" id="2.7.1.130"/>
    </reaction>
</comment>
<comment type="pathway">
    <text evidence="1">Glycolipid biosynthesis; lipid IV(A) biosynthesis; lipid IV(A) from (3R)-3-hydroxytetradecanoyl-[acyl-carrier-protein] and UDP-N-acetyl-alpha-D-glucosamine: step 6/6.</text>
</comment>
<comment type="similarity">
    <text evidence="1">Belongs to the LpxK family.</text>
</comment>
<feature type="chain" id="PRO_0000291228" description="Tetraacyldisaccharide 4'-kinase">
    <location>
        <begin position="1"/>
        <end position="320"/>
    </location>
</feature>
<feature type="binding site" evidence="1">
    <location>
        <begin position="53"/>
        <end position="60"/>
    </location>
    <ligand>
        <name>ATP</name>
        <dbReference type="ChEBI" id="CHEBI:30616"/>
    </ligand>
</feature>
<sequence length="320" mass="36309">MPFWYRPVTWAWLLLPLALLFKMISFCRRLAYQKGFFKRYKSKLPVIIVGNISVGGNGKTPFVIWLCEMLITVGYKPAVISRGYGGKSNHYPLLVGDHIKGHEAGDEPVLIHKRLGIPVVVDPNRKNAVKYIEQHFLADIIISDDGLQHYALQRDIEIVIVDGKRRFGNQHLMPIGPLRENLSRLNSVDFVVNNGGQQVNEITMLLKAQNCQRVDGETAQLSSGVQVNACAAIGYPQRFFDTLNQQQFEILKAVGFNDHHAFSKDDFTQFEASIPLLMTEKDAVKCTDFAQPNWWYLPVSAEFSAGFEQQLLNRIKEIKC</sequence>
<reference key="1">
    <citation type="journal article" date="2008" name="BMC Genomics">
        <title>Genomics of an extreme psychrophile, Psychromonas ingrahamii.</title>
        <authorList>
            <person name="Riley M."/>
            <person name="Staley J.T."/>
            <person name="Danchin A."/>
            <person name="Wang T.Z."/>
            <person name="Brettin T.S."/>
            <person name="Hauser L.J."/>
            <person name="Land M.L."/>
            <person name="Thompson L.S."/>
        </authorList>
    </citation>
    <scope>NUCLEOTIDE SEQUENCE [LARGE SCALE GENOMIC DNA]</scope>
    <source>
        <strain>DSM 17664 / CCUG 51855 / 37</strain>
    </source>
</reference>
<accession>A1STC8</accession>
<gene>
    <name evidence="1" type="primary">lpxK</name>
    <name type="ordered locus">Ping_0901</name>
</gene>
<keyword id="KW-0067">ATP-binding</keyword>
<keyword id="KW-0418">Kinase</keyword>
<keyword id="KW-0441">Lipid A biosynthesis</keyword>
<keyword id="KW-0444">Lipid biosynthesis</keyword>
<keyword id="KW-0443">Lipid metabolism</keyword>
<keyword id="KW-0547">Nucleotide-binding</keyword>
<keyword id="KW-1185">Reference proteome</keyword>
<keyword id="KW-0808">Transferase</keyword>
<name>LPXK_PSYIN</name>
<organism>
    <name type="scientific">Psychromonas ingrahamii (strain DSM 17664 / CCUG 51855 / 37)</name>
    <dbReference type="NCBI Taxonomy" id="357804"/>
    <lineage>
        <taxon>Bacteria</taxon>
        <taxon>Pseudomonadati</taxon>
        <taxon>Pseudomonadota</taxon>
        <taxon>Gammaproteobacteria</taxon>
        <taxon>Alteromonadales</taxon>
        <taxon>Psychromonadaceae</taxon>
        <taxon>Psychromonas</taxon>
    </lineage>
</organism>
<dbReference type="EC" id="2.7.1.130" evidence="1"/>
<dbReference type="EMBL" id="CP000510">
    <property type="protein sequence ID" value="ABM02743.1"/>
    <property type="molecule type" value="Genomic_DNA"/>
</dbReference>
<dbReference type="RefSeq" id="WP_011769306.1">
    <property type="nucleotide sequence ID" value="NC_008709.1"/>
</dbReference>
<dbReference type="SMR" id="A1STC8"/>
<dbReference type="STRING" id="357804.Ping_0901"/>
<dbReference type="KEGG" id="pin:Ping_0901"/>
<dbReference type="eggNOG" id="COG1663">
    <property type="taxonomic scope" value="Bacteria"/>
</dbReference>
<dbReference type="HOGENOM" id="CLU_038816_2_0_6"/>
<dbReference type="OrthoDB" id="9766423at2"/>
<dbReference type="UniPathway" id="UPA00359">
    <property type="reaction ID" value="UER00482"/>
</dbReference>
<dbReference type="Proteomes" id="UP000000639">
    <property type="component" value="Chromosome"/>
</dbReference>
<dbReference type="GO" id="GO:0005886">
    <property type="term" value="C:plasma membrane"/>
    <property type="evidence" value="ECO:0007669"/>
    <property type="project" value="TreeGrafter"/>
</dbReference>
<dbReference type="GO" id="GO:0005524">
    <property type="term" value="F:ATP binding"/>
    <property type="evidence" value="ECO:0007669"/>
    <property type="project" value="UniProtKB-UniRule"/>
</dbReference>
<dbReference type="GO" id="GO:0009029">
    <property type="term" value="F:tetraacyldisaccharide 4'-kinase activity"/>
    <property type="evidence" value="ECO:0007669"/>
    <property type="project" value="UniProtKB-UniRule"/>
</dbReference>
<dbReference type="GO" id="GO:0009245">
    <property type="term" value="P:lipid A biosynthetic process"/>
    <property type="evidence" value="ECO:0007669"/>
    <property type="project" value="UniProtKB-UniRule"/>
</dbReference>
<dbReference type="GO" id="GO:0009244">
    <property type="term" value="P:lipopolysaccharide core region biosynthetic process"/>
    <property type="evidence" value="ECO:0007669"/>
    <property type="project" value="TreeGrafter"/>
</dbReference>
<dbReference type="HAMAP" id="MF_00409">
    <property type="entry name" value="LpxK"/>
    <property type="match status" value="1"/>
</dbReference>
<dbReference type="InterPro" id="IPR003758">
    <property type="entry name" value="LpxK"/>
</dbReference>
<dbReference type="InterPro" id="IPR027417">
    <property type="entry name" value="P-loop_NTPase"/>
</dbReference>
<dbReference type="NCBIfam" id="TIGR00682">
    <property type="entry name" value="lpxK"/>
    <property type="match status" value="1"/>
</dbReference>
<dbReference type="PANTHER" id="PTHR42724">
    <property type="entry name" value="TETRAACYLDISACCHARIDE 4'-KINASE"/>
    <property type="match status" value="1"/>
</dbReference>
<dbReference type="PANTHER" id="PTHR42724:SF1">
    <property type="entry name" value="TETRAACYLDISACCHARIDE 4'-KINASE, MITOCHONDRIAL-RELATED"/>
    <property type="match status" value="1"/>
</dbReference>
<dbReference type="Pfam" id="PF02606">
    <property type="entry name" value="LpxK"/>
    <property type="match status" value="1"/>
</dbReference>
<dbReference type="SUPFAM" id="SSF52540">
    <property type="entry name" value="P-loop containing nucleoside triphosphate hydrolases"/>
    <property type="match status" value="1"/>
</dbReference>
<protein>
    <recommendedName>
        <fullName evidence="1">Tetraacyldisaccharide 4'-kinase</fullName>
        <ecNumber evidence="1">2.7.1.130</ecNumber>
    </recommendedName>
    <alternativeName>
        <fullName evidence="1">Lipid A 4'-kinase</fullName>
    </alternativeName>
</protein>
<evidence type="ECO:0000255" key="1">
    <source>
        <dbReference type="HAMAP-Rule" id="MF_00409"/>
    </source>
</evidence>
<proteinExistence type="inferred from homology"/>